<accession>P0DMZ4</accession>
<reference key="1">
    <citation type="journal article" date="2009" name="BMC Genomics">
        <title>Comprehensive EST analysis of the symbiotic sea anemone, Anemonia viridis.</title>
        <authorList>
            <person name="Sabourault C."/>
            <person name="Ganot P."/>
            <person name="Deleury E."/>
            <person name="Allemand D."/>
            <person name="Furla P."/>
        </authorList>
    </citation>
    <scope>NUCLEOTIDE SEQUENCE [MRNA]</scope>
</reference>
<reference key="2">
    <citation type="journal article" date="2011" name="BMC Genomics">
        <title>The mining of toxin-like polypeptides from EST database by single residue distribution analysis.</title>
        <authorList>
            <person name="Kozlov S."/>
            <person name="Grishin E."/>
        </authorList>
    </citation>
    <scope>NOMENCLATURE</scope>
</reference>
<reference key="3">
    <citation type="journal article" date="2012" name="Toxicon">
        <title>Development of a rational nomenclature for naming peptide and protein toxins from sea anemones.</title>
        <authorList>
            <person name="Oliveira J.S."/>
            <person name="Fuentes-Silva D."/>
            <person name="King G.F."/>
        </authorList>
    </citation>
    <scope>NOMENCLATURE</scope>
</reference>
<dbReference type="EMBL" id="FK728565">
    <property type="status" value="NOT_ANNOTATED_CDS"/>
    <property type="molecule type" value="mRNA"/>
</dbReference>
<dbReference type="EMBL" id="FK727150">
    <property type="status" value="NOT_ANNOTATED_CDS"/>
    <property type="molecule type" value="mRNA"/>
</dbReference>
<dbReference type="EMBL" id="FK724296">
    <property type="status" value="NOT_ANNOTATED_CDS"/>
    <property type="molecule type" value="mRNA"/>
</dbReference>
<dbReference type="EMBL" id="FK749433">
    <property type="status" value="NOT_ANNOTATED_CDS"/>
    <property type="molecule type" value="mRNA"/>
</dbReference>
<dbReference type="EMBL" id="FK754641">
    <property type="status" value="NOT_ANNOTATED_CDS"/>
    <property type="molecule type" value="mRNA"/>
</dbReference>
<dbReference type="SMR" id="P0DMZ4"/>
<dbReference type="GO" id="GO:0005576">
    <property type="term" value="C:extracellular region"/>
    <property type="evidence" value="ECO:0007669"/>
    <property type="project" value="UniProtKB-SubCell"/>
</dbReference>
<dbReference type="GO" id="GO:0042151">
    <property type="term" value="C:nematocyst"/>
    <property type="evidence" value="ECO:0007669"/>
    <property type="project" value="UniProtKB-SubCell"/>
</dbReference>
<dbReference type="GO" id="GO:0090729">
    <property type="term" value="F:toxin activity"/>
    <property type="evidence" value="ECO:0007669"/>
    <property type="project" value="UniProtKB-KW"/>
</dbReference>
<sequence>MKSLVIVFVVLLGVAMISANEEELLAILQDQRNDARGGCVNKYKRNICGTLVTPMNCIAPRTRMGKFARRFCKFMCGFC</sequence>
<evidence type="ECO:0000255" key="1"/>
<evidence type="ECO:0000303" key="2">
    <source>
    </source>
</evidence>
<evidence type="ECO:0000303" key="3">
    <source>
    </source>
</evidence>
<evidence type="ECO:0000305" key="4"/>
<evidence type="ECO:0000305" key="5">
    <source>
    </source>
</evidence>
<name>TX8B_ANEVI</name>
<feature type="signal peptide" evidence="1">
    <location>
        <begin position="1"/>
        <end position="19"/>
    </location>
</feature>
<feature type="propeptide" id="PRO_0000433705" evidence="5">
    <location>
        <begin position="20"/>
        <end position="36"/>
    </location>
</feature>
<feature type="chain" id="PRO_0000433706" description="U-actitoxin-Avd8b">
    <location>
        <begin position="37"/>
        <end position="79"/>
    </location>
</feature>
<proteinExistence type="inferred from homology"/>
<keyword id="KW-0166">Nematocyst</keyword>
<keyword id="KW-0964">Secreted</keyword>
<keyword id="KW-0732">Signal</keyword>
<keyword id="KW-0800">Toxin</keyword>
<organism>
    <name type="scientific">Anemonia viridis</name>
    <name type="common">Snakelocks anemone</name>
    <dbReference type="NCBI Taxonomy" id="51769"/>
    <lineage>
        <taxon>Eukaryota</taxon>
        <taxon>Metazoa</taxon>
        <taxon>Cnidaria</taxon>
        <taxon>Anthozoa</taxon>
        <taxon>Hexacorallia</taxon>
        <taxon>Actiniaria</taxon>
        <taxon>Actiniidae</taxon>
        <taxon>Anemonia</taxon>
    </lineage>
</organism>
<comment type="subcellular location">
    <subcellularLocation>
        <location evidence="4">Secreted</location>
    </subcellularLocation>
    <subcellularLocation>
        <location evidence="4">Nematocyst</location>
    </subcellularLocation>
</comment>
<comment type="similarity">
    <text evidence="4">Belongs to the sea anemone 8 toxin family.</text>
</comment>
<comment type="caution">
    <text evidence="4">Opinions are divided on whether Anemonia viridis (Forsskal, 1775) and Anemonia sulcata (Pennant, 1777) are separate species.</text>
</comment>
<protein>
    <recommendedName>
        <fullName evidence="3">U-actitoxin-Avd8b</fullName>
        <shortName evidence="3">U-AITX-Avd8b</shortName>
    </recommendedName>
    <alternativeName>
        <fullName evidence="2">Avtx-2</fullName>
    </alternativeName>
</protein>